<protein>
    <recommendedName>
        <fullName>6,7-dimethyl-8-ribityllumazine synthase</fullName>
        <shortName>DMRL synthase</shortName>
        <shortName>LS</shortName>
        <shortName>Lumazine synthase</shortName>
        <ecNumber>2.5.1.78</ecNumber>
    </recommendedName>
</protein>
<reference key="1">
    <citation type="journal article" date="1999" name="Protein Sci.">
        <title>Crystal structure analysis of a pentameric fungal and an icosahedral plant lumazine synthase reveals the structural basis for differences in assembly.</title>
        <authorList>
            <person name="Persson K."/>
            <person name="Schneider G."/>
            <person name="Jordan D.B."/>
            <person name="Viitanen P.V."/>
            <person name="Sandalova T."/>
        </authorList>
    </citation>
    <scope>NUCLEOTIDE SEQUENCE [MRNA]</scope>
    <scope>X-RAY CRYSTALLOGRAPHY (3.1 ANGSTROMS) IN COMPLEX WITH SUBSTRATE ANALOG INHIBITOR</scope>
    <scope>SUBUNIT</scope>
</reference>
<reference key="2">
    <citation type="journal article" date="2005" name="Nature">
        <title>The genome sequence of the rice blast fungus Magnaporthe grisea.</title>
        <authorList>
            <person name="Dean R.A."/>
            <person name="Talbot N.J."/>
            <person name="Ebbole D.J."/>
            <person name="Farman M.L."/>
            <person name="Mitchell T.K."/>
            <person name="Orbach M.J."/>
            <person name="Thon M.R."/>
            <person name="Kulkarni R."/>
            <person name="Xu J.-R."/>
            <person name="Pan H."/>
            <person name="Read N.D."/>
            <person name="Lee Y.-H."/>
            <person name="Carbone I."/>
            <person name="Brown D."/>
            <person name="Oh Y.Y."/>
            <person name="Donofrio N."/>
            <person name="Jeong J.S."/>
            <person name="Soanes D.M."/>
            <person name="Djonovic S."/>
            <person name="Kolomiets E."/>
            <person name="Rehmeyer C."/>
            <person name="Li W."/>
            <person name="Harding M."/>
            <person name="Kim S."/>
            <person name="Lebrun M.-H."/>
            <person name="Bohnert H."/>
            <person name="Coughlan S."/>
            <person name="Butler J."/>
            <person name="Calvo S.E."/>
            <person name="Ma L.-J."/>
            <person name="Nicol R."/>
            <person name="Purcell S."/>
            <person name="Nusbaum C."/>
            <person name="Galagan J.E."/>
            <person name="Birren B.W."/>
        </authorList>
    </citation>
    <scope>NUCLEOTIDE SEQUENCE [LARGE SCALE GENOMIC DNA]</scope>
    <source>
        <strain>70-15 / ATCC MYA-4617 / FGSC 8958</strain>
    </source>
</reference>
<proteinExistence type="evidence at protein level"/>
<comment type="function">
    <text>Catalyzes the formation of 6,7-dimethyl-8-ribityllumazine by condensation of 5-amino-6-(D-ribitylamino)uracil with 3,4-dihydroxy-2-butanone 4-phosphate. This is the penultimate step in the biosynthesis of riboflavin.</text>
</comment>
<comment type="catalytic activity">
    <reaction>
        <text>(2S)-2-hydroxy-3-oxobutyl phosphate + 5-amino-6-(D-ribitylamino)uracil = 6,7-dimethyl-8-(1-D-ribityl)lumazine + phosphate + 2 H2O + H(+)</text>
        <dbReference type="Rhea" id="RHEA:26152"/>
        <dbReference type="ChEBI" id="CHEBI:15377"/>
        <dbReference type="ChEBI" id="CHEBI:15378"/>
        <dbReference type="ChEBI" id="CHEBI:15934"/>
        <dbReference type="ChEBI" id="CHEBI:43474"/>
        <dbReference type="ChEBI" id="CHEBI:58201"/>
        <dbReference type="ChEBI" id="CHEBI:58830"/>
        <dbReference type="EC" id="2.5.1.78"/>
    </reaction>
</comment>
<comment type="pathway">
    <text>Cofactor biosynthesis; riboflavin biosynthesis; riboflavin from 2-hydroxy-3-oxobutyl phosphate and 5-amino-6-(D-ribitylamino)uracil: step 1/2.</text>
</comment>
<comment type="subunit">
    <text evidence="3">Homopentamer.</text>
</comment>
<comment type="similarity">
    <text evidence="4">Belongs to the DMRL synthase family.</text>
</comment>
<sequence length="200" mass="21072">MHTKGPTPQQHDGSALRIGIVHARWNETIIEPLLAGTKAKLLACGVKESNIVVQSVPGSWELPIAVQRLYSASQLQTPSSGPSLSAGDLLGSSTTDLTALPTTTASSTGPFDALIAIGVLIKGETMHFEYIADSVSHGLMRVQLDTGVPVIFGVLTVLTDDQAKARAGVIEGSHNHGEDWGLAAVEMGVRRRDWAAGKTE</sequence>
<gene>
    <name type="ORF">MGG_04626</name>
</gene>
<evidence type="ECO:0000250" key="1"/>
<evidence type="ECO:0000255" key="2"/>
<evidence type="ECO:0000269" key="3">
    <source>
    </source>
</evidence>
<evidence type="ECO:0000305" key="4"/>
<evidence type="ECO:0007829" key="5">
    <source>
        <dbReference type="PDB" id="1C41"/>
    </source>
</evidence>
<name>RIB4_PYRO7</name>
<organism>
    <name type="scientific">Pyricularia oryzae (strain 70-15 / ATCC MYA-4617 / FGSC 8958)</name>
    <name type="common">Rice blast fungus</name>
    <name type="synonym">Magnaporthe oryzae</name>
    <dbReference type="NCBI Taxonomy" id="242507"/>
    <lineage>
        <taxon>Eukaryota</taxon>
        <taxon>Fungi</taxon>
        <taxon>Dikarya</taxon>
        <taxon>Ascomycota</taxon>
        <taxon>Pezizomycotina</taxon>
        <taxon>Sordariomycetes</taxon>
        <taxon>Sordariomycetidae</taxon>
        <taxon>Magnaporthales</taxon>
        <taxon>Pyriculariaceae</taxon>
        <taxon>Pyricularia</taxon>
    </lineage>
</organism>
<keyword id="KW-0002">3D-structure</keyword>
<keyword id="KW-1185">Reference proteome</keyword>
<keyword id="KW-0686">Riboflavin biosynthesis</keyword>
<keyword id="KW-0808">Transferase</keyword>
<dbReference type="EC" id="2.5.1.78"/>
<dbReference type="EMBL" id="AF148449">
    <property type="protein sequence ID" value="AAD55372.1"/>
    <property type="molecule type" value="mRNA"/>
</dbReference>
<dbReference type="EMBL" id="CM001231">
    <property type="protein sequence ID" value="EHA58265.1"/>
    <property type="molecule type" value="Genomic_DNA"/>
</dbReference>
<dbReference type="RefSeq" id="XP_003710877.1">
    <property type="nucleotide sequence ID" value="XM_003710829.1"/>
</dbReference>
<dbReference type="PDB" id="1C41">
    <property type="method" value="X-ray"/>
    <property type="resolution" value="3.10 A"/>
    <property type="chains" value="A/B/C/D/E/F/G/H/I/J=1-200"/>
</dbReference>
<dbReference type="PDBsum" id="1C41"/>
<dbReference type="SMR" id="Q9UVT8"/>
<dbReference type="FunCoup" id="Q9UVT8">
    <property type="interactions" value="287"/>
</dbReference>
<dbReference type="STRING" id="242507.Q9UVT8"/>
<dbReference type="EnsemblFungi" id="MGG_04626T0">
    <property type="protein sequence ID" value="MGG_04626T0"/>
    <property type="gene ID" value="MGG_04626"/>
</dbReference>
<dbReference type="GeneID" id="2677942"/>
<dbReference type="KEGG" id="mgr:MGG_04626"/>
<dbReference type="VEuPathDB" id="FungiDB:MGG_04626"/>
<dbReference type="eggNOG" id="KOG3243">
    <property type="taxonomic scope" value="Eukaryota"/>
</dbReference>
<dbReference type="HOGENOM" id="CLU_089358_2_0_1"/>
<dbReference type="InParanoid" id="Q9UVT8"/>
<dbReference type="OMA" id="CQGVTQG"/>
<dbReference type="OrthoDB" id="2965at2759"/>
<dbReference type="BRENDA" id="2.5.1.78">
    <property type="organism ID" value="3152"/>
</dbReference>
<dbReference type="UniPathway" id="UPA00275">
    <property type="reaction ID" value="UER00404"/>
</dbReference>
<dbReference type="EvolutionaryTrace" id="Q9UVT8"/>
<dbReference type="PHI-base" id="PHI:11240"/>
<dbReference type="Proteomes" id="UP000009058">
    <property type="component" value="Chromosome 1"/>
</dbReference>
<dbReference type="GO" id="GO:0005758">
    <property type="term" value="C:mitochondrial intermembrane space"/>
    <property type="evidence" value="ECO:0007669"/>
    <property type="project" value="TreeGrafter"/>
</dbReference>
<dbReference type="GO" id="GO:0009349">
    <property type="term" value="C:riboflavin synthase complex"/>
    <property type="evidence" value="ECO:0007669"/>
    <property type="project" value="InterPro"/>
</dbReference>
<dbReference type="GO" id="GO:0000906">
    <property type="term" value="F:6,7-dimethyl-8-ribityllumazine synthase activity"/>
    <property type="evidence" value="ECO:0007669"/>
    <property type="project" value="UniProtKB-EC"/>
</dbReference>
<dbReference type="GO" id="GO:0009231">
    <property type="term" value="P:riboflavin biosynthetic process"/>
    <property type="evidence" value="ECO:0007669"/>
    <property type="project" value="UniProtKB-UniPathway"/>
</dbReference>
<dbReference type="CDD" id="cd09209">
    <property type="entry name" value="Lumazine_synthase-I"/>
    <property type="match status" value="1"/>
</dbReference>
<dbReference type="FunFam" id="3.40.50.960:FF:000005">
    <property type="entry name" value="6,7-dimethyl-8-ribityllumazine synthase"/>
    <property type="match status" value="1"/>
</dbReference>
<dbReference type="Gene3D" id="3.40.50.960">
    <property type="entry name" value="Lumazine/riboflavin synthase"/>
    <property type="match status" value="1"/>
</dbReference>
<dbReference type="HAMAP" id="MF_00178">
    <property type="entry name" value="Lumazine_synth"/>
    <property type="match status" value="1"/>
</dbReference>
<dbReference type="InterPro" id="IPR034964">
    <property type="entry name" value="LS"/>
</dbReference>
<dbReference type="InterPro" id="IPR002180">
    <property type="entry name" value="LS/RS"/>
</dbReference>
<dbReference type="InterPro" id="IPR036467">
    <property type="entry name" value="LS/RS_sf"/>
</dbReference>
<dbReference type="NCBIfam" id="TIGR00114">
    <property type="entry name" value="lumazine-synth"/>
    <property type="match status" value="1"/>
</dbReference>
<dbReference type="PANTHER" id="PTHR21058:SF0">
    <property type="entry name" value="6,7-DIMETHYL-8-RIBITYLLUMAZINE SYNTHASE"/>
    <property type="match status" value="1"/>
</dbReference>
<dbReference type="PANTHER" id="PTHR21058">
    <property type="entry name" value="6,7-DIMETHYL-8-RIBITYLLUMAZINE SYNTHASE DMRL SYNTHASE LUMAZINE SYNTHASE"/>
    <property type="match status" value="1"/>
</dbReference>
<dbReference type="Pfam" id="PF00885">
    <property type="entry name" value="DMRL_synthase"/>
    <property type="match status" value="2"/>
</dbReference>
<dbReference type="SUPFAM" id="SSF52121">
    <property type="entry name" value="Lumazine synthase"/>
    <property type="match status" value="1"/>
</dbReference>
<feature type="chain" id="PRO_0000134855" description="6,7-dimethyl-8-ribityllumazine synthase">
    <location>
        <begin position="1"/>
        <end position="200"/>
    </location>
</feature>
<feature type="active site" description="Proton donor" evidence="2">
    <location>
        <position position="127"/>
    </location>
</feature>
<feature type="binding site">
    <location>
        <position position="25"/>
    </location>
    <ligand>
        <name>5-amino-6-(D-ribitylamino)uracil</name>
        <dbReference type="ChEBI" id="CHEBI:15934"/>
    </ligand>
</feature>
<feature type="binding site">
    <location>
        <begin position="59"/>
        <end position="61"/>
    </location>
    <ligand>
        <name>5-amino-6-(D-ribitylamino)uracil</name>
        <dbReference type="ChEBI" id="CHEBI:15934"/>
    </ligand>
</feature>
<feature type="binding site">
    <location>
        <begin position="119"/>
        <end position="121"/>
    </location>
    <ligand>
        <name>5-amino-6-(D-ribitylamino)uracil</name>
        <dbReference type="ChEBI" id="CHEBI:15934"/>
    </ligand>
</feature>
<feature type="binding site" evidence="1">
    <location>
        <begin position="124"/>
        <end position="125"/>
    </location>
    <ligand>
        <name>(2S)-2-hydroxy-3-oxobutyl phosphate</name>
        <dbReference type="ChEBI" id="CHEBI:58830"/>
    </ligand>
</feature>
<feature type="binding site">
    <location>
        <position position="152"/>
    </location>
    <ligand>
        <name>5-amino-6-(D-ribitylamino)uracil</name>
        <dbReference type="ChEBI" id="CHEBI:15934"/>
    </ligand>
</feature>
<feature type="binding site" evidence="1">
    <location>
        <position position="166"/>
    </location>
    <ligand>
        <name>(2S)-2-hydroxy-3-oxobutyl phosphate</name>
        <dbReference type="ChEBI" id="CHEBI:58830"/>
    </ligand>
</feature>
<feature type="strand" evidence="5">
    <location>
        <begin position="18"/>
        <end position="23"/>
    </location>
</feature>
<feature type="helix" evidence="5">
    <location>
        <begin position="27"/>
        <end position="43"/>
    </location>
</feature>
<feature type="helix" evidence="5">
    <location>
        <begin position="48"/>
        <end position="50"/>
    </location>
</feature>
<feature type="strand" evidence="5">
    <location>
        <begin position="51"/>
        <end position="58"/>
    </location>
</feature>
<feature type="helix" evidence="5">
    <location>
        <begin position="61"/>
        <end position="75"/>
    </location>
</feature>
<feature type="strand" evidence="5">
    <location>
        <begin position="112"/>
        <end position="121"/>
    </location>
</feature>
<feature type="helix" evidence="5">
    <location>
        <begin position="127"/>
        <end position="146"/>
    </location>
</feature>
<feature type="strand" evidence="5">
    <location>
        <begin position="150"/>
        <end position="159"/>
    </location>
</feature>
<feature type="helix" evidence="5">
    <location>
        <begin position="160"/>
        <end position="166"/>
    </location>
</feature>
<feature type="helix" evidence="5">
    <location>
        <begin position="176"/>
        <end position="195"/>
    </location>
</feature>
<accession>Q9UVT8</accession>
<accession>A4QVB0</accession>
<accession>G4MRQ0</accession>